<evidence type="ECO:0000250" key="1"/>
<evidence type="ECO:0000305" key="2"/>
<proteinExistence type="inferred from homology"/>
<keyword id="KW-0687">Ribonucleoprotein</keyword>
<keyword id="KW-0689">Ribosomal protein</keyword>
<keyword id="KW-0694">RNA-binding</keyword>
<keyword id="KW-0699">rRNA-binding</keyword>
<accession>O24693</accession>
<reference key="1">
    <citation type="journal article" date="1997" name="Gene">
        <title>Organization of a large gene cluster encoding ribosomal proteins in the cyanobacterium Synechococcus sp. strain PCC 6301: comparison of gene clusters among cyanobacteria, eubacteria and chloroplast genomes.</title>
        <authorList>
            <person name="Sugita M."/>
            <person name="Sugishita H."/>
            <person name="Fujishiro T."/>
            <person name="Tsuboi M."/>
            <person name="Sugita C."/>
            <person name="Endo T."/>
            <person name="Sugiura M."/>
        </authorList>
    </citation>
    <scope>NUCLEOTIDE SEQUENCE [GENOMIC DNA]</scope>
</reference>
<reference key="2">
    <citation type="journal article" date="2007" name="Photosyn. Res.">
        <title>Complete nucleotide sequence of the freshwater unicellular cyanobacterium Synechococcus elongatus PCC 6301 chromosome: gene content and organization.</title>
        <authorList>
            <person name="Sugita C."/>
            <person name="Ogata K."/>
            <person name="Shikata M."/>
            <person name="Jikuya H."/>
            <person name="Takano J."/>
            <person name="Furumichi M."/>
            <person name="Kanehisa M."/>
            <person name="Omata T."/>
            <person name="Sugiura M."/>
            <person name="Sugita M."/>
        </authorList>
    </citation>
    <scope>NUCLEOTIDE SEQUENCE [LARGE SCALE GENOMIC DNA]</scope>
    <source>
        <strain>ATCC 27144 / PCC 6301 / SAUG 1402/1</strain>
    </source>
</reference>
<feature type="chain" id="PRO_0000129922" description="Small ribosomal subunit protein uS19">
    <location>
        <begin position="1"/>
        <end position="91"/>
    </location>
</feature>
<name>RS19_SYNP6</name>
<organism>
    <name type="scientific">Synechococcus sp. (strain ATCC 27144 / PCC 6301 / SAUG 1402/1)</name>
    <name type="common">Anacystis nidulans</name>
    <dbReference type="NCBI Taxonomy" id="269084"/>
    <lineage>
        <taxon>Bacteria</taxon>
        <taxon>Bacillati</taxon>
        <taxon>Cyanobacteriota</taxon>
        <taxon>Cyanophyceae</taxon>
        <taxon>Synechococcales</taxon>
        <taxon>Synechococcaceae</taxon>
        <taxon>Synechococcus</taxon>
    </lineage>
</organism>
<comment type="function">
    <text evidence="1">Protein S19 forms a complex with S13 that binds strongly to the 16S ribosomal RNA.</text>
</comment>
<comment type="similarity">
    <text evidence="2">Belongs to the universal ribosomal protein uS19 family.</text>
</comment>
<sequence length="91" mass="10238">MARSLKKGPFVADHLLRKVEKLNAKGDKQVIKTWSRASTILPQMIGHTIAVHNGRQHVPVYVTEQMVGHKLGEFAPTRTFRGHTKDKKAGR</sequence>
<gene>
    <name type="primary">rpsS</name>
    <name type="synonym">rps19</name>
    <name type="ordered locus">syc1869_d</name>
</gene>
<dbReference type="EMBL" id="AB000111">
    <property type="protein sequence ID" value="BAA22453.1"/>
    <property type="molecule type" value="Genomic_DNA"/>
</dbReference>
<dbReference type="EMBL" id="AP008231">
    <property type="protein sequence ID" value="BAD80059.1"/>
    <property type="molecule type" value="Genomic_DNA"/>
</dbReference>
<dbReference type="RefSeq" id="WP_011244179.1">
    <property type="nucleotide sequence ID" value="NZ_CP085785.1"/>
</dbReference>
<dbReference type="SMR" id="O24693"/>
<dbReference type="GeneID" id="72431111"/>
<dbReference type="KEGG" id="syc:syc1869_d"/>
<dbReference type="eggNOG" id="COG0185">
    <property type="taxonomic scope" value="Bacteria"/>
</dbReference>
<dbReference type="Proteomes" id="UP000001175">
    <property type="component" value="Chromosome"/>
</dbReference>
<dbReference type="GO" id="GO:0005737">
    <property type="term" value="C:cytoplasm"/>
    <property type="evidence" value="ECO:0007669"/>
    <property type="project" value="UniProtKB-ARBA"/>
</dbReference>
<dbReference type="GO" id="GO:0015935">
    <property type="term" value="C:small ribosomal subunit"/>
    <property type="evidence" value="ECO:0007669"/>
    <property type="project" value="InterPro"/>
</dbReference>
<dbReference type="GO" id="GO:0019843">
    <property type="term" value="F:rRNA binding"/>
    <property type="evidence" value="ECO:0007669"/>
    <property type="project" value="UniProtKB-UniRule"/>
</dbReference>
<dbReference type="GO" id="GO:0003735">
    <property type="term" value="F:structural constituent of ribosome"/>
    <property type="evidence" value="ECO:0007669"/>
    <property type="project" value="InterPro"/>
</dbReference>
<dbReference type="GO" id="GO:0000028">
    <property type="term" value="P:ribosomal small subunit assembly"/>
    <property type="evidence" value="ECO:0007669"/>
    <property type="project" value="TreeGrafter"/>
</dbReference>
<dbReference type="GO" id="GO:0006412">
    <property type="term" value="P:translation"/>
    <property type="evidence" value="ECO:0007669"/>
    <property type="project" value="UniProtKB-UniRule"/>
</dbReference>
<dbReference type="FunFam" id="3.30.860.10:FF:000001">
    <property type="entry name" value="30S ribosomal protein S19"/>
    <property type="match status" value="1"/>
</dbReference>
<dbReference type="Gene3D" id="3.30.860.10">
    <property type="entry name" value="30s Ribosomal Protein S19, Chain A"/>
    <property type="match status" value="1"/>
</dbReference>
<dbReference type="HAMAP" id="MF_00531">
    <property type="entry name" value="Ribosomal_uS19"/>
    <property type="match status" value="1"/>
</dbReference>
<dbReference type="InterPro" id="IPR002222">
    <property type="entry name" value="Ribosomal_uS19"/>
</dbReference>
<dbReference type="InterPro" id="IPR005732">
    <property type="entry name" value="Ribosomal_uS19_bac-type"/>
</dbReference>
<dbReference type="InterPro" id="IPR020934">
    <property type="entry name" value="Ribosomal_uS19_CS"/>
</dbReference>
<dbReference type="InterPro" id="IPR023575">
    <property type="entry name" value="Ribosomal_uS19_SF"/>
</dbReference>
<dbReference type="NCBIfam" id="TIGR01050">
    <property type="entry name" value="rpsS_bact"/>
    <property type="match status" value="1"/>
</dbReference>
<dbReference type="PANTHER" id="PTHR11880">
    <property type="entry name" value="RIBOSOMAL PROTEIN S19P FAMILY MEMBER"/>
    <property type="match status" value="1"/>
</dbReference>
<dbReference type="PANTHER" id="PTHR11880:SF8">
    <property type="entry name" value="SMALL RIBOSOMAL SUBUNIT PROTEIN US19M"/>
    <property type="match status" value="1"/>
</dbReference>
<dbReference type="Pfam" id="PF00203">
    <property type="entry name" value="Ribosomal_S19"/>
    <property type="match status" value="1"/>
</dbReference>
<dbReference type="PIRSF" id="PIRSF002144">
    <property type="entry name" value="Ribosomal_S19"/>
    <property type="match status" value="1"/>
</dbReference>
<dbReference type="PRINTS" id="PR00975">
    <property type="entry name" value="RIBOSOMALS19"/>
</dbReference>
<dbReference type="SUPFAM" id="SSF54570">
    <property type="entry name" value="Ribosomal protein S19"/>
    <property type="match status" value="1"/>
</dbReference>
<dbReference type="PROSITE" id="PS00323">
    <property type="entry name" value="RIBOSOMAL_S19"/>
    <property type="match status" value="1"/>
</dbReference>
<protein>
    <recommendedName>
        <fullName evidence="2">Small ribosomal subunit protein uS19</fullName>
    </recommendedName>
    <alternativeName>
        <fullName>30S ribosomal protein S19</fullName>
    </alternativeName>
</protein>